<feature type="chain" id="PRO_0000436294" description="Efflux pump mlcE">
    <location>
        <begin position="1"/>
        <end position="553"/>
    </location>
</feature>
<feature type="transmembrane region" description="Helical" evidence="1">
    <location>
        <begin position="41"/>
        <end position="61"/>
    </location>
</feature>
<feature type="transmembrane region" description="Helical" evidence="1">
    <location>
        <begin position="77"/>
        <end position="96"/>
    </location>
</feature>
<feature type="transmembrane region" description="Helical" evidence="1">
    <location>
        <begin position="101"/>
        <end position="121"/>
    </location>
</feature>
<feature type="transmembrane region" description="Helical" evidence="1">
    <location>
        <begin position="136"/>
        <end position="156"/>
    </location>
</feature>
<feature type="transmembrane region" description="Helical" evidence="1">
    <location>
        <begin position="164"/>
        <end position="184"/>
    </location>
</feature>
<feature type="transmembrane region" description="Helical" evidence="1">
    <location>
        <begin position="196"/>
        <end position="216"/>
    </location>
</feature>
<feature type="transmembrane region" description="Helical" evidence="1">
    <location>
        <begin position="245"/>
        <end position="265"/>
    </location>
</feature>
<feature type="transmembrane region" description="Helical" evidence="1">
    <location>
        <begin position="273"/>
        <end position="293"/>
    </location>
</feature>
<feature type="transmembrane region" description="Helical" evidence="1">
    <location>
        <begin position="319"/>
        <end position="339"/>
    </location>
</feature>
<feature type="transmembrane region" description="Helical" evidence="1">
    <location>
        <begin position="352"/>
        <end position="372"/>
    </location>
</feature>
<feature type="transmembrane region" description="Helical" evidence="1">
    <location>
        <begin position="376"/>
        <end position="396"/>
    </location>
</feature>
<feature type="transmembrane region" description="Helical" evidence="1">
    <location>
        <begin position="440"/>
        <end position="460"/>
    </location>
</feature>
<feature type="transmembrane region" description="Helical" evidence="1">
    <location>
        <begin position="516"/>
        <end position="536"/>
    </location>
</feature>
<feature type="region of interest" description="Disordered" evidence="3">
    <location>
        <begin position="1"/>
        <end position="29"/>
    </location>
</feature>
<feature type="compositionally biased region" description="Basic and acidic residues" evidence="3">
    <location>
        <begin position="1"/>
        <end position="19"/>
    </location>
</feature>
<feature type="glycosylation site" description="N-linked (GlcNAc...) asparagine" evidence="2">
    <location>
        <position position="21"/>
    </location>
</feature>
<feature type="glycosylation site" description="N-linked (GlcNAc...) asparagine" evidence="2">
    <location>
        <position position="543"/>
    </location>
</feature>
<name>MLCE_PENCI</name>
<comment type="function">
    <text evidence="5 6">Efflux pump; part of the gene cluster that mediates the biosynthesis of compactin, also known as mevastatin or ML-236B, and which acts as a potent competitive inhibitor of HMG-CoA reductase (PubMed:12172803, PubMed:12242508).</text>
</comment>
<comment type="subcellular location">
    <subcellularLocation>
        <location evidence="1">Membrane</location>
        <topology evidence="1">Multi-pass membrane protein</topology>
    </subcellularLocation>
</comment>
<comment type="biotechnology">
    <text evidence="4">Compactin (also known as mevastatin or ML-236B) and the intermediary metabolites Ml-236C and ML-236A are inhibitors of HMG-CoA reductase involved in cholesterogenesis (PubMed:1010803). Their hypocholesterolemic activity might be useful for lowering cholesterol levels in the blood and reduce artherosclerosis and coronary heart disease (PubMed:1010803).</text>
</comment>
<comment type="similarity">
    <text evidence="8">Belongs to the major facilitator superfamily. TCR/Tet family.</text>
</comment>
<proteinExistence type="evidence at protein level"/>
<sequence length="553" mass="58691">MSEPLPPKEGEPRPQKEESQNDTLEATESKSQHITGLKLGLVVASVTFVAFLMLLDMSIIVTAIPHITSEFHSLNDVGWYGSAYLLANCALQPLAGKLYTLLGLKYTFFAFLCIFELGSVLCGAARSSTMLIVGRAVAGMGGSGLVNGALTILSTAAPKHKQPVLIGVMMGLSQIAIVCGPLLGGAFTQHATWRWCFYINLPIGAVAAFLLLVITIPDRISSTDSELSTDKPMANIKSTLRKLDLVGFVVFAAFATMISLALEWGGSTYTWRSSVIIGLFCGGGFALIAFVLWERHVGDAVAMIPGSVAGKRQVWCSCLFMGFFSGSLLVFSYYLPIYFQAVKDVSPTLSGVYMLPGILGQVIMAMVSGFAIGKTGYYLPWALGSAVLVAIGAGLVSTFQPHTSTVKWVMYQFIAGFGRGCGMQTPIIAIQSTLSPEQGALGISLAVFGQTFGGSLFLDFANLVFGSGLRTGLSKYAPTVDTQAVTAAGATGFRDVVSKNNLPGVVKAYSLAVDHTFYLAVGATACTFVFAFGMGWRKIATKNDTRAVPETDA</sequence>
<keyword id="KW-0325">Glycoprotein</keyword>
<keyword id="KW-0472">Membrane</keyword>
<keyword id="KW-0812">Transmembrane</keyword>
<keyword id="KW-1133">Transmembrane helix</keyword>
<organism>
    <name type="scientific">Penicillium citrinum</name>
    <dbReference type="NCBI Taxonomy" id="5077"/>
    <lineage>
        <taxon>Eukaryota</taxon>
        <taxon>Fungi</taxon>
        <taxon>Dikarya</taxon>
        <taxon>Ascomycota</taxon>
        <taxon>Pezizomycotina</taxon>
        <taxon>Eurotiomycetes</taxon>
        <taxon>Eurotiomycetidae</taxon>
        <taxon>Eurotiales</taxon>
        <taxon>Aspergillaceae</taxon>
        <taxon>Penicillium</taxon>
    </lineage>
</organism>
<protein>
    <recommendedName>
        <fullName evidence="7">Efflux pump mlcE</fullName>
    </recommendedName>
    <alternativeName>
        <fullName evidence="7">Compactin biosynthesis protein E</fullName>
    </alternativeName>
</protein>
<dbReference type="EMBL" id="AB072893">
    <property type="protein sequence ID" value="BAC20568.1"/>
    <property type="molecule type" value="Genomic_DNA"/>
</dbReference>
<dbReference type="SMR" id="Q8J0F3"/>
<dbReference type="GlyCosmos" id="Q8J0F3">
    <property type="glycosylation" value="2 sites, No reported glycans"/>
</dbReference>
<dbReference type="GO" id="GO:0005886">
    <property type="term" value="C:plasma membrane"/>
    <property type="evidence" value="ECO:0007669"/>
    <property type="project" value="TreeGrafter"/>
</dbReference>
<dbReference type="GO" id="GO:0022857">
    <property type="term" value="F:transmembrane transporter activity"/>
    <property type="evidence" value="ECO:0007669"/>
    <property type="project" value="InterPro"/>
</dbReference>
<dbReference type="CDD" id="cd17502">
    <property type="entry name" value="MFS_Azr1_MDR_like"/>
    <property type="match status" value="1"/>
</dbReference>
<dbReference type="FunFam" id="1.20.1250.20:FF:000196">
    <property type="entry name" value="MFS toxin efflux pump (AflT)"/>
    <property type="match status" value="1"/>
</dbReference>
<dbReference type="Gene3D" id="1.20.1250.20">
    <property type="entry name" value="MFS general substrate transporter like domains"/>
    <property type="match status" value="2"/>
</dbReference>
<dbReference type="InterPro" id="IPR011701">
    <property type="entry name" value="MFS"/>
</dbReference>
<dbReference type="InterPro" id="IPR020846">
    <property type="entry name" value="MFS_dom"/>
</dbReference>
<dbReference type="InterPro" id="IPR036259">
    <property type="entry name" value="MFS_trans_sf"/>
</dbReference>
<dbReference type="PANTHER" id="PTHR23501">
    <property type="entry name" value="MAJOR FACILITATOR SUPERFAMILY"/>
    <property type="match status" value="1"/>
</dbReference>
<dbReference type="PANTHER" id="PTHR23501:SF193">
    <property type="entry name" value="MULTIDRUG TRANSPORTER, PUTATIVE (AFU_ORTHOLOGUE AFUA_8G00940)-RELATED"/>
    <property type="match status" value="1"/>
</dbReference>
<dbReference type="Pfam" id="PF07690">
    <property type="entry name" value="MFS_1"/>
    <property type="match status" value="1"/>
</dbReference>
<dbReference type="SUPFAM" id="SSF103473">
    <property type="entry name" value="MFS general substrate transporter"/>
    <property type="match status" value="2"/>
</dbReference>
<dbReference type="PROSITE" id="PS50850">
    <property type="entry name" value="MFS"/>
    <property type="match status" value="1"/>
</dbReference>
<evidence type="ECO:0000255" key="1"/>
<evidence type="ECO:0000255" key="2">
    <source>
        <dbReference type="PROSITE-ProRule" id="PRU00498"/>
    </source>
</evidence>
<evidence type="ECO:0000256" key="3">
    <source>
        <dbReference type="SAM" id="MobiDB-lite"/>
    </source>
</evidence>
<evidence type="ECO:0000269" key="4">
    <source>
    </source>
</evidence>
<evidence type="ECO:0000269" key="5">
    <source>
    </source>
</evidence>
<evidence type="ECO:0000269" key="6">
    <source>
    </source>
</evidence>
<evidence type="ECO:0000303" key="7">
    <source>
    </source>
</evidence>
<evidence type="ECO:0000305" key="8"/>
<gene>
    <name evidence="7" type="primary">mlcE</name>
</gene>
<accession>Q8J0F3</accession>
<reference key="1">
    <citation type="journal article" date="2002" name="Mol. Genet. Genomics">
        <title>Molecular cloning and characterization of an ML-236B (compactin) biosynthetic gene cluster in Penicillium citrinum.</title>
        <authorList>
            <person name="Abe Y."/>
            <person name="Suzuki T."/>
            <person name="Ono C."/>
            <person name="Iwamoto K."/>
            <person name="Hosobuchi M."/>
            <person name="Yoshikawa H."/>
        </authorList>
    </citation>
    <scope>NUCLEOTIDE SEQUENCE [GENOMIC DNA]</scope>
    <scope>INDUCTION</scope>
    <scope>FUNCTION</scope>
</reference>
<reference key="2">
    <citation type="journal article" date="2002" name="Mol. Genet. Genomics">
        <title>Effect of increased dosage of the ML-236B (compactin) biosynthetic gene cluster on ML-236B production in Penicillium citrinum.</title>
        <authorList>
            <person name="Abe Y."/>
            <person name="Suzuki T."/>
            <person name="Mizuno T."/>
            <person name="Ono C."/>
            <person name="Iwamoto K."/>
            <person name="Hosobuchi M."/>
            <person name="Yoshikawa H."/>
        </authorList>
    </citation>
    <scope>FUNCTION</scope>
</reference>
<reference key="3">
    <citation type="journal article" date="1976" name="J. Antibiot.">
        <title>ML-236A, ML-236B, and ML-236C, new inhibitors of cholesterogenesis produced by Penicillium citrinium.</title>
        <authorList>
            <person name="Endo A."/>
            <person name="Kuroda M."/>
            <person name="Tsujita Y."/>
        </authorList>
    </citation>
    <scope>BIOTECHNOLOGY</scope>
</reference>